<sequence length="304" mass="32562">MRLPIFLDTDPGIDDAVAIAAAIFAPELDLQLMTTVAGNVSVEKTTRNALQLLHFWNAEIPLAQGAAVPLVRAPRDAASVHGESGMAGYDFVEHNRKPIGIPAFLAIRDALMRAPEPVTLVAIGPLTNIALLLSQCPECKPYIRRLVIMGGSSGRGNCTPNAEFNIAADPEAAACVFRSGIEIVMCGLDVTNQAILTPDYLATLPELNRTGKMLHALFSHYRSGSMQSGLRMHDLCAIAWLVRPDLFTLKPCFVAVETQGEFTSGTTVVDIDGCLGKPANVKVALDLDVKGFQQWVAEVLALAS</sequence>
<comment type="function">
    <text evidence="1">Hydrolyzes both purine and pyrimidine ribonucleosides with a broad-substrate specificity.</text>
</comment>
<comment type="similarity">
    <text evidence="1">Belongs to the IUNH family. RihC subfamily.</text>
</comment>
<feature type="chain" id="PRO_0000206839" description="Non-specific ribonucleoside hydrolase RihC">
    <location>
        <begin position="1"/>
        <end position="304"/>
    </location>
</feature>
<feature type="active site" evidence="1">
    <location>
        <position position="233"/>
    </location>
</feature>
<dbReference type="EC" id="3.2.-.-" evidence="1"/>
<dbReference type="EMBL" id="CP000038">
    <property type="protein sequence ID" value="AAZ86832.1"/>
    <property type="molecule type" value="Genomic_DNA"/>
</dbReference>
<dbReference type="RefSeq" id="WP_001239119.1">
    <property type="nucleotide sequence ID" value="NC_007384.1"/>
</dbReference>
<dbReference type="SMR" id="Q3Z5Y0"/>
<dbReference type="GeneID" id="93777406"/>
<dbReference type="KEGG" id="ssn:SSON_0035"/>
<dbReference type="HOGENOM" id="CLU_036838_2_2_6"/>
<dbReference type="Proteomes" id="UP000002529">
    <property type="component" value="Chromosome"/>
</dbReference>
<dbReference type="GO" id="GO:0005829">
    <property type="term" value="C:cytosol"/>
    <property type="evidence" value="ECO:0007669"/>
    <property type="project" value="TreeGrafter"/>
</dbReference>
<dbReference type="GO" id="GO:0008477">
    <property type="term" value="F:purine nucleosidase activity"/>
    <property type="evidence" value="ECO:0007669"/>
    <property type="project" value="TreeGrafter"/>
</dbReference>
<dbReference type="GO" id="GO:0045437">
    <property type="term" value="F:uridine nucleosidase activity"/>
    <property type="evidence" value="ECO:0007669"/>
    <property type="project" value="UniProtKB-ARBA"/>
</dbReference>
<dbReference type="GO" id="GO:0006144">
    <property type="term" value="P:purine nucleobase metabolic process"/>
    <property type="evidence" value="ECO:0007669"/>
    <property type="project" value="UniProtKB-UniRule"/>
</dbReference>
<dbReference type="GO" id="GO:0006152">
    <property type="term" value="P:purine nucleoside catabolic process"/>
    <property type="evidence" value="ECO:0007669"/>
    <property type="project" value="TreeGrafter"/>
</dbReference>
<dbReference type="GO" id="GO:0006206">
    <property type="term" value="P:pyrimidine nucleobase metabolic process"/>
    <property type="evidence" value="ECO:0007669"/>
    <property type="project" value="UniProtKB-UniRule"/>
</dbReference>
<dbReference type="CDD" id="cd02651">
    <property type="entry name" value="nuc_hydro_IU_UC_XIUA"/>
    <property type="match status" value="1"/>
</dbReference>
<dbReference type="FunFam" id="3.90.245.10:FF:000002">
    <property type="entry name" value="Non-specific ribonucleoside hydrolase RihC"/>
    <property type="match status" value="1"/>
</dbReference>
<dbReference type="Gene3D" id="3.90.245.10">
    <property type="entry name" value="Ribonucleoside hydrolase-like"/>
    <property type="match status" value="1"/>
</dbReference>
<dbReference type="HAMAP" id="MF_01432">
    <property type="entry name" value="Nucleosid_hydro_RihC"/>
    <property type="match status" value="1"/>
</dbReference>
<dbReference type="InterPro" id="IPR015910">
    <property type="entry name" value="I/U_nuclsd_hydro_CS"/>
</dbReference>
<dbReference type="InterPro" id="IPR001910">
    <property type="entry name" value="Inosine/uridine_hydrolase_dom"/>
</dbReference>
<dbReference type="InterPro" id="IPR023186">
    <property type="entry name" value="IUNH"/>
</dbReference>
<dbReference type="InterPro" id="IPR022976">
    <property type="entry name" value="Nucleosid_hydro_RihC_nonspecif"/>
</dbReference>
<dbReference type="InterPro" id="IPR036452">
    <property type="entry name" value="Ribo_hydro-like"/>
</dbReference>
<dbReference type="NCBIfam" id="NF008036">
    <property type="entry name" value="PRK10768.1"/>
    <property type="match status" value="1"/>
</dbReference>
<dbReference type="PANTHER" id="PTHR12304">
    <property type="entry name" value="INOSINE-URIDINE PREFERRING NUCLEOSIDE HYDROLASE"/>
    <property type="match status" value="1"/>
</dbReference>
<dbReference type="PANTHER" id="PTHR12304:SF15">
    <property type="entry name" value="NON-SPECIFIC RIBONUCLEOSIDE HYDROLASE RIHC"/>
    <property type="match status" value="1"/>
</dbReference>
<dbReference type="Pfam" id="PF01156">
    <property type="entry name" value="IU_nuc_hydro"/>
    <property type="match status" value="1"/>
</dbReference>
<dbReference type="SUPFAM" id="SSF53590">
    <property type="entry name" value="Nucleoside hydrolase"/>
    <property type="match status" value="1"/>
</dbReference>
<dbReference type="PROSITE" id="PS01247">
    <property type="entry name" value="IUNH"/>
    <property type="match status" value="1"/>
</dbReference>
<accession>Q3Z5Y0</accession>
<organism>
    <name type="scientific">Shigella sonnei (strain Ss046)</name>
    <dbReference type="NCBI Taxonomy" id="300269"/>
    <lineage>
        <taxon>Bacteria</taxon>
        <taxon>Pseudomonadati</taxon>
        <taxon>Pseudomonadota</taxon>
        <taxon>Gammaproteobacteria</taxon>
        <taxon>Enterobacterales</taxon>
        <taxon>Enterobacteriaceae</taxon>
        <taxon>Shigella</taxon>
    </lineage>
</organism>
<proteinExistence type="inferred from homology"/>
<evidence type="ECO:0000255" key="1">
    <source>
        <dbReference type="HAMAP-Rule" id="MF_01432"/>
    </source>
</evidence>
<gene>
    <name evidence="1" type="primary">rihC</name>
    <name type="ordered locus">SSON_0035</name>
</gene>
<protein>
    <recommendedName>
        <fullName evidence="1">Non-specific ribonucleoside hydrolase RihC</fullName>
        <ecNumber evidence="1">3.2.-.-</ecNumber>
    </recommendedName>
    <alternativeName>
        <fullName evidence="1">Purine/pyrimidine ribonucleoside hydrolase</fullName>
    </alternativeName>
</protein>
<reference key="1">
    <citation type="journal article" date="2005" name="Nucleic Acids Res.">
        <title>Genome dynamics and diversity of Shigella species, the etiologic agents of bacillary dysentery.</title>
        <authorList>
            <person name="Yang F."/>
            <person name="Yang J."/>
            <person name="Zhang X."/>
            <person name="Chen L."/>
            <person name="Jiang Y."/>
            <person name="Yan Y."/>
            <person name="Tang X."/>
            <person name="Wang J."/>
            <person name="Xiong Z."/>
            <person name="Dong J."/>
            <person name="Xue Y."/>
            <person name="Zhu Y."/>
            <person name="Xu X."/>
            <person name="Sun L."/>
            <person name="Chen S."/>
            <person name="Nie H."/>
            <person name="Peng J."/>
            <person name="Xu J."/>
            <person name="Wang Y."/>
            <person name="Yuan Z."/>
            <person name="Wen Y."/>
            <person name="Yao Z."/>
            <person name="Shen Y."/>
            <person name="Qiang B."/>
            <person name="Hou Y."/>
            <person name="Yu J."/>
            <person name="Jin Q."/>
        </authorList>
    </citation>
    <scope>NUCLEOTIDE SEQUENCE [LARGE SCALE GENOMIC DNA]</scope>
    <source>
        <strain>Ss046</strain>
    </source>
</reference>
<name>RIHC_SHISS</name>
<keyword id="KW-0326">Glycosidase</keyword>
<keyword id="KW-0378">Hydrolase</keyword>
<keyword id="KW-1185">Reference proteome</keyword>